<name>CLASR_MOUSE</name>
<sequence>MWHEARKHERKLRGMMVDYKKRAERRREYYEKIKKDPAQFLQVHGRACKVHLDSAVALAAESPVNMMPWQGDTNNMIDRFDVRAHLDHIPDYTPPLLTTISPEQESDERKCNYERYRGLVQNDFAGISEEQCLYQIYIDELYGGLQRPSEDEKKKLAEKKASIGYTYEDSTVAEVEKVAEKPEEEESPAEEESNSDEDEVIPDIDVEVDVDELNQEQVADLNKQATTYGMADGDFVRMLRKDKEEAEAIKHAKALEEEKAMYSGRRSRRQRREFREKRLRGRKISPPSYARRDSPTYDPYKRSPSESSSESRSRSRSPSPGREEKITFITSFGGSDEEAAAAAAAAAASGAAPGKPPAPPQTGGPAPGRNASTRRRSSSSSASRTSSSRSSSRSSSRSRRGYYRSGRHARSRSRSWSRSRSRSRRYSRSRSRGRRHSDGGSRDGHRYSRSPARRGGYVPRRRSRSRSRSGDRYKRGARGPRHHSSSHSRSSWSLSPSRSRSVTRSGSRSQSRSRSRSQSHSQSQSHSPSPPREKLTRPAASPAVGEKLKKTEPAAGKETGAAKPKLTPQERLKLRMQKALNRQFKADKKAAQEKMIQQEHERQEREDELRAMARKIRMKERERREKEREEWERQYSRQSRSPSPRYSREYSSSRRRSRSRSRSPHYRH</sequence>
<accession>Q8CFC7</accession>
<accession>Q5RKW4</accession>
<accession>Q8CFC8</accession>
<accession>Q9Z2N3</accession>
<evidence type="ECO:0000250" key="1">
    <source>
        <dbReference type="UniProtKB" id="Q8N2M8"/>
    </source>
</evidence>
<evidence type="ECO:0000255" key="2"/>
<evidence type="ECO:0000256" key="3">
    <source>
        <dbReference type="SAM" id="MobiDB-lite"/>
    </source>
</evidence>
<evidence type="ECO:0000303" key="4">
    <source>
    </source>
</evidence>
<evidence type="ECO:0000303" key="5">
    <source>
    </source>
</evidence>
<evidence type="ECO:0000303" key="6">
    <source>
    </source>
</evidence>
<evidence type="ECO:0000303" key="7">
    <source ref="1"/>
</evidence>
<evidence type="ECO:0000305" key="8"/>
<evidence type="ECO:0007744" key="9">
    <source>
    </source>
</evidence>
<evidence type="ECO:0007744" key="10">
    <source>
    </source>
</evidence>
<feature type="chain" id="PRO_0000081946" description="CLK4-associating serine/arginine rich protein">
    <location>
        <begin position="1"/>
        <end position="668"/>
    </location>
</feature>
<feature type="region of interest" description="Disordered" evidence="3">
    <location>
        <begin position="173"/>
        <end position="232"/>
    </location>
</feature>
<feature type="region of interest" description="Disordered" evidence="3">
    <location>
        <begin position="252"/>
        <end position="668"/>
    </location>
</feature>
<feature type="coiled-coil region" evidence="2">
    <location>
        <begin position="579"/>
        <end position="641"/>
    </location>
</feature>
<feature type="compositionally biased region" description="Acidic residues" evidence="3">
    <location>
        <begin position="182"/>
        <end position="214"/>
    </location>
</feature>
<feature type="compositionally biased region" description="Basic residues" evidence="3">
    <location>
        <begin position="265"/>
        <end position="283"/>
    </location>
</feature>
<feature type="compositionally biased region" description="Basic and acidic residues" evidence="3">
    <location>
        <begin position="290"/>
        <end position="313"/>
    </location>
</feature>
<feature type="compositionally biased region" description="Low complexity" evidence="3">
    <location>
        <begin position="340"/>
        <end position="353"/>
    </location>
</feature>
<feature type="compositionally biased region" description="Low complexity" evidence="3">
    <location>
        <begin position="378"/>
        <end position="395"/>
    </location>
</feature>
<feature type="compositionally biased region" description="Basic residues" evidence="3">
    <location>
        <begin position="396"/>
        <end position="435"/>
    </location>
</feature>
<feature type="compositionally biased region" description="Basic and acidic residues" evidence="3">
    <location>
        <begin position="436"/>
        <end position="446"/>
    </location>
</feature>
<feature type="compositionally biased region" description="Basic residues" evidence="3">
    <location>
        <begin position="475"/>
        <end position="486"/>
    </location>
</feature>
<feature type="compositionally biased region" description="Low complexity" evidence="3">
    <location>
        <begin position="487"/>
        <end position="510"/>
    </location>
</feature>
<feature type="compositionally biased region" description="Low complexity" evidence="3">
    <location>
        <begin position="518"/>
        <end position="527"/>
    </location>
</feature>
<feature type="compositionally biased region" description="Basic and acidic residues" evidence="3">
    <location>
        <begin position="584"/>
        <end position="611"/>
    </location>
</feature>
<feature type="compositionally biased region" description="Basic and acidic residues" evidence="3">
    <location>
        <begin position="619"/>
        <end position="635"/>
    </location>
</feature>
<feature type="compositionally biased region" description="Low complexity" evidence="3">
    <location>
        <begin position="636"/>
        <end position="645"/>
    </location>
</feature>
<feature type="compositionally biased region" description="Basic residues" evidence="3">
    <location>
        <begin position="653"/>
        <end position="668"/>
    </location>
</feature>
<feature type="modified residue" description="Phosphoserine" evidence="1">
    <location>
        <position position="101"/>
    </location>
</feature>
<feature type="modified residue" description="Phosphoserine" evidence="9">
    <location>
        <position position="285"/>
    </location>
</feature>
<feature type="modified residue" description="Phosphoserine" evidence="1">
    <location>
        <position position="294"/>
    </location>
</feature>
<feature type="modified residue" description="Phosphothreonine" evidence="1">
    <location>
        <position position="327"/>
    </location>
</feature>
<feature type="modified residue" description="Phosphoserine" evidence="1">
    <location>
        <position position="331"/>
    </location>
</feature>
<feature type="modified residue" description="Phosphoserine" evidence="10">
    <location>
        <position position="335"/>
    </location>
</feature>
<feature type="modified residue" description="Phosphoserine" evidence="10">
    <location>
        <position position="541"/>
    </location>
</feature>
<feature type="modified residue" description="Phosphothreonine" evidence="1">
    <location>
        <position position="567"/>
    </location>
</feature>
<feature type="splice variant" id="VSP_008213" description="In isoform 3." evidence="6 7">
    <original>PKLTPQERLKLRMQKALNRQFKADKKAAQEKMIQQEHERQEREDELRAMARKIRMKERERREKE</original>
    <variation>VSKNLELARLTPVSSSVQSWARWACRGPRGRGEPAQRLGKGYPGKLSPIPASHGTPAGPQVPDS</variation>
    <location>
        <begin position="564"/>
        <end position="627"/>
    </location>
</feature>
<feature type="splice variant" id="VSP_008211" description="In isoform 2." evidence="4 5">
    <original>PKLTPQERLKLRMQKALNRQFKADK</original>
    <variation>VTQADPTGEAEASDAEGSEPPVQGG</variation>
    <location>
        <begin position="564"/>
        <end position="588"/>
    </location>
</feature>
<feature type="splice variant" id="VSP_008212" description="In isoform 2." evidence="4 5">
    <location>
        <begin position="589"/>
        <end position="668"/>
    </location>
</feature>
<feature type="splice variant" id="VSP_008214" description="In isoform 3." evidence="6 7">
    <location>
        <begin position="628"/>
        <end position="668"/>
    </location>
</feature>
<gene>
    <name type="primary">Clasrp</name>
    <name type="synonym">Clasp</name>
    <name type="synonym">Sfrs16</name>
    <name type="synonym">Srsf16</name>
    <name type="synonym">Swap2</name>
</gene>
<comment type="function">
    <text>Probably functions as an alternative splicing regulator. May regulate the mRNA splicing of genes such as CLK1. May act by regulating members of the CLK kinase family.</text>
</comment>
<comment type="subunit">
    <text>Probably interacts with CLK4.</text>
</comment>
<comment type="subcellular location">
    <subcellularLocation>
        <location>Nucleus</location>
    </subcellularLocation>
    <text>Located in nuclear dots.</text>
</comment>
<comment type="subcellular location">
    <molecule>Isoform 2</molecule>
    <subcellularLocation>
        <location>Nucleus</location>
        <location>Nucleoplasm</location>
    </subcellularLocation>
</comment>
<comment type="alternative products">
    <event type="alternative splicing"/>
    <isoform>
        <id>Q8CFC7-1</id>
        <name>1</name>
        <name>L</name>
        <sequence type="displayed"/>
    </isoform>
    <isoform>
        <id>Q8CFC7-2</id>
        <name>2</name>
        <name>S</name>
        <sequence type="described" ref="VSP_008211 VSP_008212"/>
    </isoform>
    <isoform>
        <id>Q8CFC7-3</id>
        <name>3</name>
        <sequence type="described" ref="VSP_008213 VSP_008214"/>
    </isoform>
</comment>
<comment type="tissue specificity">
    <text>Highly expressed in brain. Expressed at intermediate level in lung and liver. In brain, it is expressed in the hippocampus, cerebellum and olfactory bulb.</text>
</comment>
<comment type="PTM">
    <text>Phosphorylated in vitro by CLK4.</text>
</comment>
<comment type="similarity">
    <text evidence="8">Belongs to the splicing factor SR family.</text>
</comment>
<comment type="caution">
    <text evidence="8">It is uncertain whether Met-1 or Met-16 is the initiator.</text>
</comment>
<comment type="sequence caution" evidence="8">
    <conflict type="erroneous initiation">
        <sequence resource="EMBL-CDS" id="AAC82338"/>
    </conflict>
    <text>Truncated N-terminus.</text>
</comment>
<comment type="sequence caution" evidence="8">
    <conflict type="erroneous initiation">
        <sequence resource="EMBL-CDS" id="BAB26225"/>
    </conflict>
    <text>Truncated N-terminus.</text>
</comment>
<organism>
    <name type="scientific">Mus musculus</name>
    <name type="common">Mouse</name>
    <dbReference type="NCBI Taxonomy" id="10090"/>
    <lineage>
        <taxon>Eukaryota</taxon>
        <taxon>Metazoa</taxon>
        <taxon>Chordata</taxon>
        <taxon>Craniata</taxon>
        <taxon>Vertebrata</taxon>
        <taxon>Euteleostomi</taxon>
        <taxon>Mammalia</taxon>
        <taxon>Eutheria</taxon>
        <taxon>Euarchontoglires</taxon>
        <taxon>Glires</taxon>
        <taxon>Rodentia</taxon>
        <taxon>Myomorpha</taxon>
        <taxon>Muroidea</taxon>
        <taxon>Muridae</taxon>
        <taxon>Murinae</taxon>
        <taxon>Mus</taxon>
        <taxon>Mus</taxon>
    </lineage>
</organism>
<reference key="1">
    <citation type="submission" date="1998-01" db="EMBL/GenBank/DDBJ databases">
        <title>A transcriptional map in the region of 19q13 derived using direct sequencing and exon trapping.</title>
        <authorList>
            <person name="Yoshiura K."/>
            <person name="Murray J.C."/>
        </authorList>
    </citation>
    <scope>NUCLEOTIDE SEQUENCE [MRNA] (ISOFORM 3)</scope>
</reference>
<reference key="2">
    <citation type="journal article" date="2005" name="Science">
        <title>The transcriptional landscape of the mammalian genome.</title>
        <authorList>
            <person name="Carninci P."/>
            <person name="Kasukawa T."/>
            <person name="Katayama S."/>
            <person name="Gough J."/>
            <person name="Frith M.C."/>
            <person name="Maeda N."/>
            <person name="Oyama R."/>
            <person name="Ravasi T."/>
            <person name="Lenhard B."/>
            <person name="Wells C."/>
            <person name="Kodzius R."/>
            <person name="Shimokawa K."/>
            <person name="Bajic V.B."/>
            <person name="Brenner S.E."/>
            <person name="Batalov S."/>
            <person name="Forrest A.R."/>
            <person name="Zavolan M."/>
            <person name="Davis M.J."/>
            <person name="Wilming L.G."/>
            <person name="Aidinis V."/>
            <person name="Allen J.E."/>
            <person name="Ambesi-Impiombato A."/>
            <person name="Apweiler R."/>
            <person name="Aturaliya R.N."/>
            <person name="Bailey T.L."/>
            <person name="Bansal M."/>
            <person name="Baxter L."/>
            <person name="Beisel K.W."/>
            <person name="Bersano T."/>
            <person name="Bono H."/>
            <person name="Chalk A.M."/>
            <person name="Chiu K.P."/>
            <person name="Choudhary V."/>
            <person name="Christoffels A."/>
            <person name="Clutterbuck D.R."/>
            <person name="Crowe M.L."/>
            <person name="Dalla E."/>
            <person name="Dalrymple B.P."/>
            <person name="de Bono B."/>
            <person name="Della Gatta G."/>
            <person name="di Bernardo D."/>
            <person name="Down T."/>
            <person name="Engstrom P."/>
            <person name="Fagiolini M."/>
            <person name="Faulkner G."/>
            <person name="Fletcher C.F."/>
            <person name="Fukushima T."/>
            <person name="Furuno M."/>
            <person name="Futaki S."/>
            <person name="Gariboldi M."/>
            <person name="Georgii-Hemming P."/>
            <person name="Gingeras T.R."/>
            <person name="Gojobori T."/>
            <person name="Green R.E."/>
            <person name="Gustincich S."/>
            <person name="Harbers M."/>
            <person name="Hayashi Y."/>
            <person name="Hensch T.K."/>
            <person name="Hirokawa N."/>
            <person name="Hill D."/>
            <person name="Huminiecki L."/>
            <person name="Iacono M."/>
            <person name="Ikeo K."/>
            <person name="Iwama A."/>
            <person name="Ishikawa T."/>
            <person name="Jakt M."/>
            <person name="Kanapin A."/>
            <person name="Katoh M."/>
            <person name="Kawasawa Y."/>
            <person name="Kelso J."/>
            <person name="Kitamura H."/>
            <person name="Kitano H."/>
            <person name="Kollias G."/>
            <person name="Krishnan S.P."/>
            <person name="Kruger A."/>
            <person name="Kummerfeld S.K."/>
            <person name="Kurochkin I.V."/>
            <person name="Lareau L.F."/>
            <person name="Lazarevic D."/>
            <person name="Lipovich L."/>
            <person name="Liu J."/>
            <person name="Liuni S."/>
            <person name="McWilliam S."/>
            <person name="Madan Babu M."/>
            <person name="Madera M."/>
            <person name="Marchionni L."/>
            <person name="Matsuda H."/>
            <person name="Matsuzawa S."/>
            <person name="Miki H."/>
            <person name="Mignone F."/>
            <person name="Miyake S."/>
            <person name="Morris K."/>
            <person name="Mottagui-Tabar S."/>
            <person name="Mulder N."/>
            <person name="Nakano N."/>
            <person name="Nakauchi H."/>
            <person name="Ng P."/>
            <person name="Nilsson R."/>
            <person name="Nishiguchi S."/>
            <person name="Nishikawa S."/>
            <person name="Nori F."/>
            <person name="Ohara O."/>
            <person name="Okazaki Y."/>
            <person name="Orlando V."/>
            <person name="Pang K.C."/>
            <person name="Pavan W.J."/>
            <person name="Pavesi G."/>
            <person name="Pesole G."/>
            <person name="Petrovsky N."/>
            <person name="Piazza S."/>
            <person name="Reed J."/>
            <person name="Reid J.F."/>
            <person name="Ring B.Z."/>
            <person name="Ringwald M."/>
            <person name="Rost B."/>
            <person name="Ruan Y."/>
            <person name="Salzberg S.L."/>
            <person name="Sandelin A."/>
            <person name="Schneider C."/>
            <person name="Schoenbach C."/>
            <person name="Sekiguchi K."/>
            <person name="Semple C.A."/>
            <person name="Seno S."/>
            <person name="Sessa L."/>
            <person name="Sheng Y."/>
            <person name="Shibata Y."/>
            <person name="Shimada H."/>
            <person name="Shimada K."/>
            <person name="Silva D."/>
            <person name="Sinclair B."/>
            <person name="Sperling S."/>
            <person name="Stupka E."/>
            <person name="Sugiura K."/>
            <person name="Sultana R."/>
            <person name="Takenaka Y."/>
            <person name="Taki K."/>
            <person name="Tammoja K."/>
            <person name="Tan S.L."/>
            <person name="Tang S."/>
            <person name="Taylor M.S."/>
            <person name="Tegner J."/>
            <person name="Teichmann S.A."/>
            <person name="Ueda H.R."/>
            <person name="van Nimwegen E."/>
            <person name="Verardo R."/>
            <person name="Wei C.L."/>
            <person name="Yagi K."/>
            <person name="Yamanishi H."/>
            <person name="Zabarovsky E."/>
            <person name="Zhu S."/>
            <person name="Zimmer A."/>
            <person name="Hide W."/>
            <person name="Bult C."/>
            <person name="Grimmond S.M."/>
            <person name="Teasdale R.D."/>
            <person name="Liu E.T."/>
            <person name="Brusic V."/>
            <person name="Quackenbush J."/>
            <person name="Wahlestedt C."/>
            <person name="Mattick J.S."/>
            <person name="Hume D.A."/>
            <person name="Kai C."/>
            <person name="Sasaki D."/>
            <person name="Tomaru Y."/>
            <person name="Fukuda S."/>
            <person name="Kanamori-Katayama M."/>
            <person name="Suzuki M."/>
            <person name="Aoki J."/>
            <person name="Arakawa T."/>
            <person name="Iida J."/>
            <person name="Imamura K."/>
            <person name="Itoh M."/>
            <person name="Kato T."/>
            <person name="Kawaji H."/>
            <person name="Kawagashira N."/>
            <person name="Kawashima T."/>
            <person name="Kojima M."/>
            <person name="Kondo S."/>
            <person name="Konno H."/>
            <person name="Nakano K."/>
            <person name="Ninomiya N."/>
            <person name="Nishio T."/>
            <person name="Okada M."/>
            <person name="Plessy C."/>
            <person name="Shibata K."/>
            <person name="Shiraki T."/>
            <person name="Suzuki S."/>
            <person name="Tagami M."/>
            <person name="Waki K."/>
            <person name="Watahiki A."/>
            <person name="Okamura-Oho Y."/>
            <person name="Suzuki H."/>
            <person name="Kawai J."/>
            <person name="Hayashizaki Y."/>
        </authorList>
    </citation>
    <scope>NUCLEOTIDE SEQUENCE [LARGE SCALE MRNA] (ISOFORM 3)</scope>
    <source>
        <strain>C57BL/6J</strain>
        <tissue>Tongue</tissue>
    </source>
</reference>
<reference key="3">
    <citation type="journal article" date="2004" name="Genome Res.">
        <title>The status, quality, and expansion of the NIH full-length cDNA project: the Mammalian Gene Collection (MGC).</title>
        <authorList>
            <consortium name="The MGC Project Team"/>
        </authorList>
    </citation>
    <scope>NUCLEOTIDE SEQUENCE [LARGE SCALE MRNA] (ISOFORM 2)</scope>
    <source>
        <strain>C57BL/6J</strain>
        <tissue>Brain</tissue>
    </source>
</reference>
<reference key="4">
    <citation type="journal article" date="2002" name="J. Biol. Chem.">
        <title>Novel SR-rich-related protein Clasp specifically interacts with inactivated Clk4 and induces the exon EB inclusion of Clk.</title>
        <authorList>
            <person name="Katsu R."/>
            <person name="Onogi H."/>
            <person name="Wada K."/>
            <person name="Kawaguchi Y."/>
            <person name="Hagiwara M."/>
        </authorList>
    </citation>
    <scope>NUCLEOTIDE SEQUENCE [MRNA] OF 16-668 (ISOFORMS 1 AND 2)</scope>
    <source>
        <strain>BALB/cJ</strain>
        <tissue>Brain</tissue>
    </source>
</reference>
<reference key="5">
    <citation type="journal article" date="2009" name="Mol. Cell. Proteomics">
        <title>Large scale localization of protein phosphorylation by use of electron capture dissociation mass spectrometry.</title>
        <authorList>
            <person name="Sweet S.M."/>
            <person name="Bailey C.M."/>
            <person name="Cunningham D.L."/>
            <person name="Heath J.K."/>
            <person name="Cooper H.J."/>
        </authorList>
    </citation>
    <scope>PHOSPHORYLATION [LARGE SCALE ANALYSIS] AT SER-285</scope>
    <scope>IDENTIFICATION BY MASS SPECTROMETRY [LARGE SCALE ANALYSIS]</scope>
    <source>
        <tissue>Embryonic fibroblast</tissue>
    </source>
</reference>
<reference key="6">
    <citation type="journal article" date="2010" name="Cell">
        <title>A tissue-specific atlas of mouse protein phosphorylation and expression.</title>
        <authorList>
            <person name="Huttlin E.L."/>
            <person name="Jedrychowski M.P."/>
            <person name="Elias J.E."/>
            <person name="Goswami T."/>
            <person name="Rad R."/>
            <person name="Beausoleil S.A."/>
            <person name="Villen J."/>
            <person name="Haas W."/>
            <person name="Sowa M.E."/>
            <person name="Gygi S.P."/>
        </authorList>
    </citation>
    <scope>PHOSPHORYLATION [LARGE SCALE ANALYSIS] AT SER-335 AND SER-541</scope>
    <scope>IDENTIFICATION BY MASS SPECTROMETRY [LARGE SCALE ANALYSIS]</scope>
    <source>
        <tissue>Brain</tissue>
        <tissue>Kidney</tissue>
        <tissue>Lung</tissue>
        <tissue>Pancreas</tissue>
        <tissue>Spleen</tissue>
        <tissue>Testis</tissue>
    </source>
</reference>
<protein>
    <recommendedName>
        <fullName>CLK4-associating serine/arginine rich protein</fullName>
    </recommendedName>
    <alternativeName>
        <fullName>Clk4-associating SR-related protein</fullName>
    </alternativeName>
    <alternativeName>
        <fullName>Serine/arginine-rich splicing factor 16</fullName>
    </alternativeName>
    <alternativeName>
        <fullName>Splicing factor, arginine/serine-rich 16</fullName>
    </alternativeName>
    <alternativeName>
        <fullName>Suppressor of white-apricot homolog 2</fullName>
    </alternativeName>
</protein>
<dbReference type="EMBL" id="AF042799">
    <property type="protein sequence ID" value="AAC82338.1"/>
    <property type="status" value="ALT_INIT"/>
    <property type="molecule type" value="mRNA"/>
</dbReference>
<dbReference type="EMBL" id="AK009334">
    <property type="protein sequence ID" value="BAB26225.1"/>
    <property type="status" value="ALT_INIT"/>
    <property type="molecule type" value="mRNA"/>
</dbReference>
<dbReference type="EMBL" id="BC051916">
    <property type="protein sequence ID" value="AAH51916.2"/>
    <property type="molecule type" value="mRNA"/>
</dbReference>
<dbReference type="EMBL" id="AB080582">
    <property type="protein sequence ID" value="BAC15600.1"/>
    <property type="molecule type" value="mRNA"/>
</dbReference>
<dbReference type="EMBL" id="AB080583">
    <property type="protein sequence ID" value="BAC15601.1"/>
    <property type="molecule type" value="mRNA"/>
</dbReference>
<dbReference type="CCDS" id="CCDS52061.1">
    <molecule id="Q8CFC7-1"/>
</dbReference>
<dbReference type="RefSeq" id="NP_057889.3">
    <molecule id="Q8CFC7-1"/>
    <property type="nucleotide sequence ID" value="NM_016680.5"/>
</dbReference>
<dbReference type="SMR" id="Q8CFC7"/>
<dbReference type="BioGRID" id="207329">
    <property type="interactions" value="3"/>
</dbReference>
<dbReference type="FunCoup" id="Q8CFC7">
    <property type="interactions" value="2966"/>
</dbReference>
<dbReference type="STRING" id="10090.ENSMUSP00000083205"/>
<dbReference type="GlyGen" id="Q8CFC7">
    <property type="glycosylation" value="3 sites, 1 O-linked glycan (3 sites)"/>
</dbReference>
<dbReference type="iPTMnet" id="Q8CFC7"/>
<dbReference type="PhosphoSitePlus" id="Q8CFC7"/>
<dbReference type="jPOST" id="Q8CFC7"/>
<dbReference type="PaxDb" id="10090-ENSMUSP00000083205"/>
<dbReference type="PeptideAtlas" id="Q8CFC7"/>
<dbReference type="ProteomicsDB" id="283359">
    <molecule id="Q8CFC7-1"/>
</dbReference>
<dbReference type="ProteomicsDB" id="283360">
    <molecule id="Q8CFC7-2"/>
</dbReference>
<dbReference type="ProteomicsDB" id="283361">
    <molecule id="Q8CFC7-3"/>
</dbReference>
<dbReference type="Pumba" id="Q8CFC7"/>
<dbReference type="Antibodypedia" id="54055">
    <property type="antibodies" value="72 antibodies from 18 providers"/>
</dbReference>
<dbReference type="DNASU" id="53609"/>
<dbReference type="Ensembl" id="ENSMUST00000086041.7">
    <molecule id="Q8CFC7-1"/>
    <property type="protein sequence ID" value="ENSMUSP00000083205.6"/>
    <property type="gene ID" value="ENSMUSG00000061028.8"/>
</dbReference>
<dbReference type="Ensembl" id="ENSMUST00000207907.2">
    <molecule id="Q8CFC7-3"/>
    <property type="protein sequence ID" value="ENSMUSP00000146982.2"/>
    <property type="gene ID" value="ENSMUSG00000061028.8"/>
</dbReference>
<dbReference type="Ensembl" id="ENSMUST00000208068.2">
    <molecule id="Q8CFC7-2"/>
    <property type="protein sequence ID" value="ENSMUSP00000147103.2"/>
    <property type="gene ID" value="ENSMUSG00000061028.8"/>
</dbReference>
<dbReference type="GeneID" id="53609"/>
<dbReference type="KEGG" id="mmu:53609"/>
<dbReference type="UCSC" id="uc009fml.2">
    <molecule id="Q8CFC7-1"/>
    <property type="organism name" value="mouse"/>
</dbReference>
<dbReference type="AGR" id="MGI:1855695"/>
<dbReference type="CTD" id="11129"/>
<dbReference type="MGI" id="MGI:1855695">
    <property type="gene designation" value="Clasrp"/>
</dbReference>
<dbReference type="VEuPathDB" id="HostDB:ENSMUSG00000061028"/>
<dbReference type="eggNOG" id="KOG2548">
    <property type="taxonomic scope" value="Eukaryota"/>
</dbReference>
<dbReference type="GeneTree" id="ENSGT00940000153892"/>
<dbReference type="HOGENOM" id="CLU_008114_1_0_1"/>
<dbReference type="InParanoid" id="Q8CFC7"/>
<dbReference type="OMA" id="YSECAPV"/>
<dbReference type="OrthoDB" id="10070965at2759"/>
<dbReference type="PhylomeDB" id="Q8CFC7"/>
<dbReference type="TreeFam" id="TF351621"/>
<dbReference type="BioGRID-ORCS" id="53609">
    <property type="hits" value="25 hits in 80 CRISPR screens"/>
</dbReference>
<dbReference type="ChiTaRS" id="Clasrp">
    <property type="organism name" value="mouse"/>
</dbReference>
<dbReference type="PRO" id="PR:Q8CFC7"/>
<dbReference type="Proteomes" id="UP000000589">
    <property type="component" value="Chromosome 7"/>
</dbReference>
<dbReference type="RNAct" id="Q8CFC7">
    <property type="molecule type" value="protein"/>
</dbReference>
<dbReference type="Bgee" id="ENSMUSG00000061028">
    <property type="expression patterns" value="Expressed in retinal neural layer and 243 other cell types or tissues"/>
</dbReference>
<dbReference type="ExpressionAtlas" id="Q8CFC7">
    <property type="expression patterns" value="baseline and differential"/>
</dbReference>
<dbReference type="GO" id="GO:0005654">
    <property type="term" value="C:nucleoplasm"/>
    <property type="evidence" value="ECO:0007669"/>
    <property type="project" value="UniProtKB-SubCell"/>
</dbReference>
<dbReference type="GO" id="GO:0006397">
    <property type="term" value="P:mRNA processing"/>
    <property type="evidence" value="ECO:0007669"/>
    <property type="project" value="UniProtKB-KW"/>
</dbReference>
<dbReference type="GO" id="GO:0008380">
    <property type="term" value="P:RNA splicing"/>
    <property type="evidence" value="ECO:0007669"/>
    <property type="project" value="UniProtKB-KW"/>
</dbReference>
<dbReference type="InterPro" id="IPR040397">
    <property type="entry name" value="SWAP"/>
</dbReference>
<dbReference type="InterPro" id="IPR019147">
    <property type="entry name" value="SWAP_N_domain"/>
</dbReference>
<dbReference type="PANTHER" id="PTHR13161:SF4">
    <property type="entry name" value="CLK4-ASSOCIATING SERINE_ARGININE RICH PROTEIN"/>
    <property type="match status" value="1"/>
</dbReference>
<dbReference type="PANTHER" id="PTHR13161">
    <property type="entry name" value="SPLICING FACTOR SUPPRESSOR OF WHITE APRICOT"/>
    <property type="match status" value="1"/>
</dbReference>
<dbReference type="Pfam" id="PF09750">
    <property type="entry name" value="DRY_EERY"/>
    <property type="match status" value="1"/>
</dbReference>
<dbReference type="SMART" id="SM01141">
    <property type="entry name" value="DRY_EERY"/>
    <property type="match status" value="1"/>
</dbReference>
<proteinExistence type="evidence at protein level"/>
<keyword id="KW-0025">Alternative splicing</keyword>
<keyword id="KW-0175">Coiled coil</keyword>
<keyword id="KW-0507">mRNA processing</keyword>
<keyword id="KW-0508">mRNA splicing</keyword>
<keyword id="KW-0539">Nucleus</keyword>
<keyword id="KW-0597">Phosphoprotein</keyword>
<keyword id="KW-1185">Reference proteome</keyword>